<keyword id="KW-0233">DNA recombination</keyword>
<keyword id="KW-0238">DNA-binding</keyword>
<keyword id="KW-0804">Transcription</keyword>
<keyword id="KW-0805">Transcription regulation</keyword>
<keyword id="KW-0810">Translation regulation</keyword>
<comment type="function">
    <text evidence="1">This protein is one of the two subunits of integration host factor, a specific DNA-binding protein that functions in genetic recombination as well as in transcriptional and translational control.</text>
</comment>
<comment type="subunit">
    <text evidence="1">Heterodimer of an alpha and a beta chain.</text>
</comment>
<comment type="similarity">
    <text evidence="1">Belongs to the bacterial histone-like protein family.</text>
</comment>
<gene>
    <name evidence="1" type="primary">ihfB</name>
    <name evidence="1" type="synonym">himD</name>
    <name type="ordered locus">BUAP5A_302</name>
</gene>
<organism>
    <name type="scientific">Buchnera aphidicola subsp. Acyrthosiphon pisum (strain 5A)</name>
    <dbReference type="NCBI Taxonomy" id="563178"/>
    <lineage>
        <taxon>Bacteria</taxon>
        <taxon>Pseudomonadati</taxon>
        <taxon>Pseudomonadota</taxon>
        <taxon>Gammaproteobacteria</taxon>
        <taxon>Enterobacterales</taxon>
        <taxon>Erwiniaceae</taxon>
        <taxon>Buchnera</taxon>
    </lineage>
</organism>
<name>IHFB_BUCA5</name>
<accession>B8D999</accession>
<protein>
    <recommendedName>
        <fullName evidence="1">Integration host factor subunit beta</fullName>
        <shortName evidence="1">IHF-beta</shortName>
    </recommendedName>
</protein>
<feature type="chain" id="PRO_1000190437" description="Integration host factor subunit beta">
    <location>
        <begin position="1"/>
        <end position="94"/>
    </location>
</feature>
<evidence type="ECO:0000255" key="1">
    <source>
        <dbReference type="HAMAP-Rule" id="MF_00381"/>
    </source>
</evidence>
<proteinExistence type="inferred from homology"/>
<dbReference type="EMBL" id="CP001161">
    <property type="protein sequence ID" value="ACL30670.1"/>
    <property type="molecule type" value="Genomic_DNA"/>
</dbReference>
<dbReference type="RefSeq" id="WP_009874261.1">
    <property type="nucleotide sequence ID" value="NC_011833.1"/>
</dbReference>
<dbReference type="SMR" id="B8D999"/>
<dbReference type="KEGG" id="bap:BUAP5A_302"/>
<dbReference type="HOGENOM" id="CLU_105066_2_0_6"/>
<dbReference type="OrthoDB" id="9804203at2"/>
<dbReference type="Proteomes" id="UP000006904">
    <property type="component" value="Chromosome"/>
</dbReference>
<dbReference type="GO" id="GO:0005694">
    <property type="term" value="C:chromosome"/>
    <property type="evidence" value="ECO:0007669"/>
    <property type="project" value="InterPro"/>
</dbReference>
<dbReference type="GO" id="GO:0005829">
    <property type="term" value="C:cytosol"/>
    <property type="evidence" value="ECO:0007669"/>
    <property type="project" value="TreeGrafter"/>
</dbReference>
<dbReference type="GO" id="GO:0003677">
    <property type="term" value="F:DNA binding"/>
    <property type="evidence" value="ECO:0007669"/>
    <property type="project" value="UniProtKB-UniRule"/>
</dbReference>
<dbReference type="GO" id="GO:0030527">
    <property type="term" value="F:structural constituent of chromatin"/>
    <property type="evidence" value="ECO:0007669"/>
    <property type="project" value="InterPro"/>
</dbReference>
<dbReference type="GO" id="GO:0006310">
    <property type="term" value="P:DNA recombination"/>
    <property type="evidence" value="ECO:0007669"/>
    <property type="project" value="UniProtKB-UniRule"/>
</dbReference>
<dbReference type="GO" id="GO:0006355">
    <property type="term" value="P:regulation of DNA-templated transcription"/>
    <property type="evidence" value="ECO:0007669"/>
    <property type="project" value="UniProtKB-UniRule"/>
</dbReference>
<dbReference type="GO" id="GO:0006417">
    <property type="term" value="P:regulation of translation"/>
    <property type="evidence" value="ECO:0007669"/>
    <property type="project" value="UniProtKB-UniRule"/>
</dbReference>
<dbReference type="CDD" id="cd13836">
    <property type="entry name" value="IHF_B"/>
    <property type="match status" value="1"/>
</dbReference>
<dbReference type="FunFam" id="4.10.520.10:FF:000003">
    <property type="entry name" value="Integration host factor subunit beta"/>
    <property type="match status" value="1"/>
</dbReference>
<dbReference type="Gene3D" id="4.10.520.10">
    <property type="entry name" value="IHF-like DNA-binding proteins"/>
    <property type="match status" value="1"/>
</dbReference>
<dbReference type="HAMAP" id="MF_00381">
    <property type="entry name" value="IHF_beta"/>
    <property type="match status" value="1"/>
</dbReference>
<dbReference type="InterPro" id="IPR000119">
    <property type="entry name" value="Hist_DNA-bd"/>
</dbReference>
<dbReference type="InterPro" id="IPR020816">
    <property type="entry name" value="Histone-like_DNA-bd_CS"/>
</dbReference>
<dbReference type="InterPro" id="IPR010992">
    <property type="entry name" value="IHF-like_DNA-bd_dom_sf"/>
</dbReference>
<dbReference type="InterPro" id="IPR005685">
    <property type="entry name" value="IHF_beta"/>
</dbReference>
<dbReference type="NCBIfam" id="TIGR00988">
    <property type="entry name" value="hip"/>
    <property type="match status" value="1"/>
</dbReference>
<dbReference type="NCBIfam" id="NF001222">
    <property type="entry name" value="PRK00199.1"/>
    <property type="match status" value="1"/>
</dbReference>
<dbReference type="PANTHER" id="PTHR33175">
    <property type="entry name" value="DNA-BINDING PROTEIN HU"/>
    <property type="match status" value="1"/>
</dbReference>
<dbReference type="PANTHER" id="PTHR33175:SF5">
    <property type="entry name" value="INTEGRATION HOST FACTOR SUBUNIT BETA"/>
    <property type="match status" value="1"/>
</dbReference>
<dbReference type="Pfam" id="PF00216">
    <property type="entry name" value="Bac_DNA_binding"/>
    <property type="match status" value="1"/>
</dbReference>
<dbReference type="PRINTS" id="PR01727">
    <property type="entry name" value="DNABINDINGHU"/>
</dbReference>
<dbReference type="SMART" id="SM00411">
    <property type="entry name" value="BHL"/>
    <property type="match status" value="1"/>
</dbReference>
<dbReference type="SUPFAM" id="SSF47729">
    <property type="entry name" value="IHF-like DNA-binding proteins"/>
    <property type="match status" value="1"/>
</dbReference>
<dbReference type="PROSITE" id="PS00045">
    <property type="entry name" value="HISTONE_LIKE"/>
    <property type="match status" value="1"/>
</dbReference>
<reference key="1">
    <citation type="journal article" date="2009" name="Science">
        <title>The dynamics and time scale of ongoing genomic erosion in symbiotic bacteria.</title>
        <authorList>
            <person name="Moran N.A."/>
            <person name="McLaughlin H.J."/>
            <person name="Sorek R."/>
        </authorList>
    </citation>
    <scope>NUCLEOTIDE SEQUENCE [LARGE SCALE GENOMIC DNA]</scope>
    <source>
        <strain>5A</strain>
    </source>
</reference>
<sequence length="94" mass="10974">MIKSELFERIAEQKINISNKMIERAAKEMLEHMIISLANGKRIEIRGFGSFSLHYRSSRIGRNPKTGKSVKLNEKYVPYFKPGKKLRDRANIHK</sequence>